<gene>
    <name evidence="6" type="primary">SPEAR1</name>
    <name evidence="5" type="synonym">TIE2</name>
    <name evidence="8" type="ordered locus">At2g20080</name>
    <name evidence="9" type="ORF">T2G17.12</name>
</gene>
<protein>
    <recommendedName>
        <fullName evidence="6">Protein SPEAR1</fullName>
    </recommendedName>
    <alternativeName>
        <fullName evidence="6">SPL-like, EAR-containing protein 1</fullName>
    </alternativeName>
    <alternativeName>
        <fullName evidence="5">TCP interactor containing EAR motif protein 2</fullName>
    </alternativeName>
</protein>
<sequence>MGSTFFGRPNVVGSSPPSSSPTSSSSSPATRRGKKNGSEKPKQPQRGLGVAQLEKIRLHGEMSCNSFNSYNPSLYPQEDVRMQGGYSSIPSQSSAPYGFYPNMMMGVHRDQYDRATMSWNPSYGILESQHSLEPNITRHFLNEDPSSTTRRSKSLGSGIQHSGSSENQEVDLELRLSL</sequence>
<feature type="chain" id="PRO_0000435866" description="Protein SPEAR1">
    <location>
        <begin position="1"/>
        <end position="178"/>
    </location>
</feature>
<feature type="region of interest" description="Disordered" evidence="2">
    <location>
        <begin position="1"/>
        <end position="48"/>
    </location>
</feature>
<feature type="region of interest" description="Disordered" evidence="2">
    <location>
        <begin position="139"/>
        <end position="178"/>
    </location>
</feature>
<feature type="short sequence motif" description="SPL" evidence="7">
    <location>
        <begin position="46"/>
        <end position="54"/>
    </location>
</feature>
<feature type="short sequence motif" description="EAR" evidence="7">
    <location>
        <begin position="170"/>
        <end position="176"/>
    </location>
</feature>
<feature type="compositionally biased region" description="Low complexity" evidence="2">
    <location>
        <begin position="14"/>
        <end position="28"/>
    </location>
</feature>
<feature type="compositionally biased region" description="Polar residues" evidence="2">
    <location>
        <begin position="144"/>
        <end position="167"/>
    </location>
</feature>
<feature type="splice variant" id="VSP_058189" description="In isoform 3.">
    <original>EDVRMQGGYSSIPSQSSAPYGFYPNMMM</original>
    <variation>VTYTNTSLHNRDSDPKASKLIKTRYICV</variation>
    <location>
        <begin position="78"/>
        <end position="105"/>
    </location>
</feature>
<feature type="splice variant" id="VSP_058190" description="In isoform 2.">
    <location>
        <begin position="78"/>
        <end position="104"/>
    </location>
</feature>
<feature type="splice variant" id="VSP_058191" description="In isoform 3.">
    <location>
        <begin position="106"/>
        <end position="178"/>
    </location>
</feature>
<organism evidence="9">
    <name type="scientific">Arabidopsis thaliana</name>
    <name type="common">Mouse-ear cress</name>
    <dbReference type="NCBI Taxonomy" id="3702"/>
    <lineage>
        <taxon>Eukaryota</taxon>
        <taxon>Viridiplantae</taxon>
        <taxon>Streptophyta</taxon>
        <taxon>Embryophyta</taxon>
        <taxon>Tracheophyta</taxon>
        <taxon>Spermatophyta</taxon>
        <taxon>Magnoliopsida</taxon>
        <taxon>eudicotyledons</taxon>
        <taxon>Gunneridae</taxon>
        <taxon>Pentapetalae</taxon>
        <taxon>rosids</taxon>
        <taxon>malvids</taxon>
        <taxon>Brassicales</taxon>
        <taxon>Brassicaceae</taxon>
        <taxon>Camelineae</taxon>
        <taxon>Arabidopsis</taxon>
    </lineage>
</organism>
<evidence type="ECO:0000250" key="1">
    <source>
        <dbReference type="UniProtKB" id="Q6IDB0"/>
    </source>
</evidence>
<evidence type="ECO:0000256" key="2">
    <source>
        <dbReference type="SAM" id="MobiDB-lite"/>
    </source>
</evidence>
<evidence type="ECO:0000269" key="3">
    <source>
    </source>
</evidence>
<evidence type="ECO:0000269" key="4">
    <source>
    </source>
</evidence>
<evidence type="ECO:0000303" key="5">
    <source>
    </source>
</evidence>
<evidence type="ECO:0000303" key="6">
    <source>
    </source>
</evidence>
<evidence type="ECO:0000305" key="7"/>
<evidence type="ECO:0000312" key="8">
    <source>
        <dbReference type="Araport" id="AT2G20080"/>
    </source>
</evidence>
<evidence type="ECO:0000312" key="9">
    <source>
        <dbReference type="EMBL" id="AAO37152.1"/>
    </source>
</evidence>
<reference key="1">
    <citation type="journal article" date="1999" name="Nature">
        <title>Sequence and analysis of chromosome 2 of the plant Arabidopsis thaliana.</title>
        <authorList>
            <person name="Lin X."/>
            <person name="Kaul S."/>
            <person name="Rounsley S.D."/>
            <person name="Shea T.P."/>
            <person name="Benito M.-I."/>
            <person name="Town C.D."/>
            <person name="Fujii C.Y."/>
            <person name="Mason T.M."/>
            <person name="Bowman C.L."/>
            <person name="Barnstead M.E."/>
            <person name="Feldblyum T.V."/>
            <person name="Buell C.R."/>
            <person name="Ketchum K.A."/>
            <person name="Lee J.J."/>
            <person name="Ronning C.M."/>
            <person name="Koo H.L."/>
            <person name="Moffat K.S."/>
            <person name="Cronin L.A."/>
            <person name="Shen M."/>
            <person name="Pai G."/>
            <person name="Van Aken S."/>
            <person name="Umayam L."/>
            <person name="Tallon L.J."/>
            <person name="Gill J.E."/>
            <person name="Adams M.D."/>
            <person name="Carrera A.J."/>
            <person name="Creasy T.H."/>
            <person name="Goodman H.M."/>
            <person name="Somerville C.R."/>
            <person name="Copenhaver G.P."/>
            <person name="Preuss D."/>
            <person name="Nierman W.C."/>
            <person name="White O."/>
            <person name="Eisen J.A."/>
            <person name="Salzberg S.L."/>
            <person name="Fraser C.M."/>
            <person name="Venter J.C."/>
        </authorList>
    </citation>
    <scope>NUCLEOTIDE SEQUENCE [LARGE SCALE GENOMIC DNA]</scope>
    <source>
        <strain>cv. Columbia</strain>
    </source>
</reference>
<reference key="2">
    <citation type="journal article" date="2017" name="Plant J.">
        <title>Araport11: a complete reannotation of the Arabidopsis thaliana reference genome.</title>
        <authorList>
            <person name="Cheng C.Y."/>
            <person name="Krishnakumar V."/>
            <person name="Chan A.P."/>
            <person name="Thibaud-Nissen F."/>
            <person name="Schobel S."/>
            <person name="Town C.D."/>
        </authorList>
    </citation>
    <scope>GENOME REANNOTATION</scope>
    <source>
        <strain>cv. Columbia</strain>
    </source>
</reference>
<reference key="3">
    <citation type="journal article" date="2002" name="Plant Physiol.">
        <title>Cloning and sequencing of cDNAs for hypothetical genes from chromosome 2 of Arabidopsis.</title>
        <authorList>
            <person name="Xiao Y.-L."/>
            <person name="Malik M."/>
            <person name="Whitelaw C.A."/>
            <person name="Town C.D."/>
        </authorList>
    </citation>
    <scope>NUCLEOTIDE SEQUENCE [LARGE SCALE MRNA] (ISOFORMS 1; 2 AND 3)</scope>
    <source>
        <strain>cv. Columbia</strain>
    </source>
</reference>
<reference key="4">
    <citation type="submission" date="2004-06" db="EMBL/GenBank/DDBJ databases">
        <authorList>
            <person name="Underwood B.A."/>
            <person name="Xiao Y.-L."/>
            <person name="Moskal W.A. Jr."/>
            <person name="Monaghan E.L."/>
            <person name="Wang W."/>
            <person name="Redman J.C."/>
            <person name="Wu H.C."/>
            <person name="Utterback T."/>
            <person name="Town C.D."/>
        </authorList>
    </citation>
    <scope>NUCLEOTIDE SEQUENCE [LARGE SCALE MRNA] (ISOFORM 1)</scope>
    <source>
        <strain>cv. Columbia</strain>
    </source>
</reference>
<reference key="5">
    <citation type="journal article" date="2013" name="Plant Cell">
        <title>The TIE1 transcriptional repressor links TCP transcription factors with TOPLESS/TOPLESS-RELATED corepressors and modulates leaf development in Arabidopsis.</title>
        <authorList>
            <person name="Tao Q."/>
            <person name="Guo D."/>
            <person name="Wei B."/>
            <person name="Zhang F."/>
            <person name="Pang C."/>
            <person name="Jiang H."/>
            <person name="Zhang J."/>
            <person name="Wei T."/>
            <person name="Gu H."/>
            <person name="Qu L.J."/>
            <person name="Qin G."/>
        </authorList>
    </citation>
    <scope>GENE FAMILY</scope>
    <scope>NOMENCLATURE</scope>
    <scope>TISSUE SPECIFICITY</scope>
</reference>
<reference key="6">
    <citation type="journal article" date="2014" name="J. Genet. Genomics">
        <title>SPOROCYTELESS is a novel embryophyte-specific transcription repressor that interacts with TPL and TCP proteins in Arabidopsis.</title>
        <authorList>
            <person name="Chen G.H."/>
            <person name="Sun J.Y."/>
            <person name="Liu M."/>
            <person name="Liu J."/>
            <person name="Yang W.C."/>
        </authorList>
    </citation>
    <scope>GENE FAMILY</scope>
    <scope>NOMENCLATURE</scope>
    <scope>INTERACTION WITH SPL AND SPEAR2</scope>
</reference>
<name>SPER1_ARATH</name>
<accession>Q84X40</accession>
<accession>Q84X41</accession>
<accession>Q9SL73</accession>
<keyword id="KW-0025">Alternative splicing</keyword>
<keyword id="KW-1185">Reference proteome</keyword>
<keyword id="KW-0678">Repressor</keyword>
<keyword id="KW-0804">Transcription</keyword>
<keyword id="KW-0805">Transcription regulation</keyword>
<proteinExistence type="evidence at protein level"/>
<comment type="function">
    <text evidence="1">Adapter-like transcriptional repressor recruiting TPL/TPR corepressors to inhibit TCP transcription factors.</text>
</comment>
<comment type="subunit">
    <text evidence="4">Interacts with SPL and SPEAR2.</text>
</comment>
<comment type="alternative products">
    <event type="alternative splicing"/>
    <isoform>
        <id>Q84X40-1</id>
        <name>1</name>
        <sequence type="displayed"/>
    </isoform>
    <isoform>
        <id>Q84X40-2</id>
        <name>2</name>
        <sequence type="described" ref="VSP_058190"/>
    </isoform>
    <isoform>
        <id>Q84X40-3</id>
        <name>3</name>
        <sequence type="described" ref="VSP_058189 VSP_058191"/>
    </isoform>
</comment>
<comment type="tissue specificity">
    <text evidence="3">Not detected in leaves.</text>
</comment>
<dbReference type="EMBL" id="AC006081">
    <property type="protein sequence ID" value="AAD24402.1"/>
    <property type="molecule type" value="Genomic_DNA"/>
</dbReference>
<dbReference type="EMBL" id="CP002685">
    <property type="protein sequence ID" value="AEC06962.1"/>
    <property type="molecule type" value="Genomic_DNA"/>
</dbReference>
<dbReference type="EMBL" id="CP002685">
    <property type="protein sequence ID" value="AEC06963.1"/>
    <property type="molecule type" value="Genomic_DNA"/>
</dbReference>
<dbReference type="EMBL" id="AY219062">
    <property type="protein sequence ID" value="AAO37152.1"/>
    <property type="molecule type" value="mRNA"/>
</dbReference>
<dbReference type="EMBL" id="AY649273">
    <property type="protein sequence ID" value="AAT69190.1"/>
    <property type="molecule type" value="mRNA"/>
</dbReference>
<dbReference type="EMBL" id="AY219061">
    <property type="protein sequence ID" value="AAO37151.1"/>
    <property type="molecule type" value="mRNA"/>
</dbReference>
<dbReference type="EMBL" id="AY219060">
    <property type="protein sequence ID" value="AAO37150.1"/>
    <property type="molecule type" value="mRNA"/>
</dbReference>
<dbReference type="PIR" id="G84584">
    <property type="entry name" value="G84584"/>
</dbReference>
<dbReference type="RefSeq" id="NP_179598.2">
    <molecule id="Q84X40-1"/>
    <property type="nucleotide sequence ID" value="NM_127566.4"/>
</dbReference>
<dbReference type="RefSeq" id="NP_973486.1">
    <molecule id="Q84X40-2"/>
    <property type="nucleotide sequence ID" value="NM_201757.2"/>
</dbReference>
<dbReference type="STRING" id="3702.Q84X40"/>
<dbReference type="PaxDb" id="3702-AT2G20080.1"/>
<dbReference type="ProteomicsDB" id="245344">
    <molecule id="Q84X40-1"/>
</dbReference>
<dbReference type="EnsemblPlants" id="AT2G20080.1">
    <molecule id="Q84X40-1"/>
    <property type="protein sequence ID" value="AT2G20080.1"/>
    <property type="gene ID" value="AT2G20080"/>
</dbReference>
<dbReference type="EnsemblPlants" id="AT2G20080.2">
    <molecule id="Q84X40-2"/>
    <property type="protein sequence ID" value="AT2G20080.2"/>
    <property type="gene ID" value="AT2G20080"/>
</dbReference>
<dbReference type="GeneID" id="816527"/>
<dbReference type="Gramene" id="AT2G20080.1">
    <molecule id="Q84X40-1"/>
    <property type="protein sequence ID" value="AT2G20080.1"/>
    <property type="gene ID" value="AT2G20080"/>
</dbReference>
<dbReference type="Gramene" id="AT2G20080.2">
    <molecule id="Q84X40-2"/>
    <property type="protein sequence ID" value="AT2G20080.2"/>
    <property type="gene ID" value="AT2G20080"/>
</dbReference>
<dbReference type="KEGG" id="ath:AT2G20080"/>
<dbReference type="Araport" id="AT2G20080"/>
<dbReference type="TAIR" id="AT2G20080">
    <property type="gene designation" value="TIE2"/>
</dbReference>
<dbReference type="eggNOG" id="ENOG502RXQS">
    <property type="taxonomic scope" value="Eukaryota"/>
</dbReference>
<dbReference type="HOGENOM" id="CLU_094368_0_0_1"/>
<dbReference type="InParanoid" id="Q84X40"/>
<dbReference type="OMA" id="QPSMTRH"/>
<dbReference type="PhylomeDB" id="Q84X40"/>
<dbReference type="PRO" id="PR:Q84X40"/>
<dbReference type="Proteomes" id="UP000006548">
    <property type="component" value="Chromosome 2"/>
</dbReference>
<dbReference type="ExpressionAtlas" id="Q84X40">
    <property type="expression patterns" value="baseline and differential"/>
</dbReference>
<dbReference type="GO" id="GO:0003700">
    <property type="term" value="F:DNA-binding transcription factor activity"/>
    <property type="evidence" value="ECO:0007669"/>
    <property type="project" value="InterPro"/>
</dbReference>
<dbReference type="GO" id="GO:0045892">
    <property type="term" value="P:negative regulation of DNA-templated transcription"/>
    <property type="evidence" value="ECO:0000250"/>
    <property type="project" value="TAIR"/>
</dbReference>
<dbReference type="InterPro" id="IPR040356">
    <property type="entry name" value="SPEAR"/>
</dbReference>
<dbReference type="PANTHER" id="PTHR33388">
    <property type="entry name" value="OS01G0212500 PROTEIN"/>
    <property type="match status" value="1"/>
</dbReference>
<dbReference type="PANTHER" id="PTHR33388:SF18">
    <property type="entry name" value="PROTEIN SPEAR1"/>
    <property type="match status" value="1"/>
</dbReference>